<evidence type="ECO:0000255" key="1">
    <source>
        <dbReference type="HAMAP-Rule" id="MF_00176"/>
    </source>
</evidence>
<evidence type="ECO:0000305" key="2"/>
<feature type="chain" id="PRO_0000122051" description="Serine--tRNA ligase">
    <location>
        <begin position="1"/>
        <end position="421"/>
    </location>
</feature>
<feature type="binding site" evidence="1">
    <location>
        <begin position="229"/>
        <end position="231"/>
    </location>
    <ligand>
        <name>L-serine</name>
        <dbReference type="ChEBI" id="CHEBI:33384"/>
    </ligand>
</feature>
<feature type="binding site" evidence="1">
    <location>
        <begin position="260"/>
        <end position="262"/>
    </location>
    <ligand>
        <name>ATP</name>
        <dbReference type="ChEBI" id="CHEBI:30616"/>
    </ligand>
</feature>
<feature type="binding site" evidence="1">
    <location>
        <position position="283"/>
    </location>
    <ligand>
        <name>L-serine</name>
        <dbReference type="ChEBI" id="CHEBI:33384"/>
    </ligand>
</feature>
<feature type="binding site" evidence="1">
    <location>
        <begin position="347"/>
        <end position="350"/>
    </location>
    <ligand>
        <name>ATP</name>
        <dbReference type="ChEBI" id="CHEBI:30616"/>
    </ligand>
</feature>
<feature type="binding site" evidence="1">
    <location>
        <position position="381"/>
    </location>
    <ligand>
        <name>L-serine</name>
        <dbReference type="ChEBI" id="CHEBI:33384"/>
    </ligand>
</feature>
<accession>Q8RH11</accession>
<reference key="1">
    <citation type="journal article" date="2002" name="J. Bacteriol.">
        <title>Genome sequence and analysis of the oral bacterium Fusobacterium nucleatum strain ATCC 25586.</title>
        <authorList>
            <person name="Kapatral V."/>
            <person name="Anderson I."/>
            <person name="Ivanova N."/>
            <person name="Reznik G."/>
            <person name="Los T."/>
            <person name="Lykidis A."/>
            <person name="Bhattacharyya A."/>
            <person name="Bartman A."/>
            <person name="Gardner W."/>
            <person name="Grechkin G."/>
            <person name="Zhu L."/>
            <person name="Vasieva O."/>
            <person name="Chu L."/>
            <person name="Kogan Y."/>
            <person name="Chaga O."/>
            <person name="Goltsman E."/>
            <person name="Bernal A."/>
            <person name="Larsen N."/>
            <person name="D'Souza M."/>
            <person name="Walunas T."/>
            <person name="Pusch G."/>
            <person name="Haselkorn R."/>
            <person name="Fonstein M."/>
            <person name="Kyrpides N.C."/>
            <person name="Overbeek R."/>
        </authorList>
    </citation>
    <scope>NUCLEOTIDE SEQUENCE [LARGE SCALE GENOMIC DNA]</scope>
    <source>
        <strain>ATCC 25586 / DSM 15643 / BCRC 10681 / CIP 101130 / JCM 8532 / KCTC 2640 / LMG 13131 / VPI 4355</strain>
    </source>
</reference>
<protein>
    <recommendedName>
        <fullName evidence="1">Serine--tRNA ligase</fullName>
        <ecNumber evidence="1">6.1.1.11</ecNumber>
    </recommendedName>
    <alternativeName>
        <fullName evidence="1">Seryl-tRNA synthetase</fullName>
        <shortName evidence="1">SerRS</shortName>
    </alternativeName>
    <alternativeName>
        <fullName evidence="1">Seryl-tRNA(Ser/Sec) synthetase</fullName>
    </alternativeName>
</protein>
<dbReference type="EC" id="6.1.1.11" evidence="1"/>
<dbReference type="EMBL" id="AE009951">
    <property type="protein sequence ID" value="AAL94319.1"/>
    <property type="status" value="ALT_INIT"/>
    <property type="molecule type" value="Genomic_DNA"/>
</dbReference>
<dbReference type="RefSeq" id="NP_603020.2">
    <property type="nucleotide sequence ID" value="NC_003454.1"/>
</dbReference>
<dbReference type="RefSeq" id="WP_011016148.1">
    <property type="nucleotide sequence ID" value="NZ_CP028101.1"/>
</dbReference>
<dbReference type="SMR" id="Q8RH11"/>
<dbReference type="FunCoup" id="Q8RH11">
    <property type="interactions" value="376"/>
</dbReference>
<dbReference type="STRING" id="190304.FN0110"/>
<dbReference type="PaxDb" id="190304-FN0110"/>
<dbReference type="EnsemblBacteria" id="AAL94319">
    <property type="protein sequence ID" value="AAL94319"/>
    <property type="gene ID" value="FN0110"/>
</dbReference>
<dbReference type="GeneID" id="79782761"/>
<dbReference type="KEGG" id="fnu:FN0110"/>
<dbReference type="PATRIC" id="fig|190304.8.peg.698"/>
<dbReference type="eggNOG" id="COG0172">
    <property type="taxonomic scope" value="Bacteria"/>
</dbReference>
<dbReference type="HOGENOM" id="CLU_023797_1_1_0"/>
<dbReference type="InParanoid" id="Q8RH11"/>
<dbReference type="BioCyc" id="FNUC190304:G1FZS-722-MONOMER"/>
<dbReference type="UniPathway" id="UPA00906">
    <property type="reaction ID" value="UER00895"/>
</dbReference>
<dbReference type="Proteomes" id="UP000002521">
    <property type="component" value="Chromosome"/>
</dbReference>
<dbReference type="GO" id="GO:0005737">
    <property type="term" value="C:cytoplasm"/>
    <property type="evidence" value="ECO:0007669"/>
    <property type="project" value="UniProtKB-SubCell"/>
</dbReference>
<dbReference type="GO" id="GO:0005524">
    <property type="term" value="F:ATP binding"/>
    <property type="evidence" value="ECO:0007669"/>
    <property type="project" value="UniProtKB-UniRule"/>
</dbReference>
<dbReference type="GO" id="GO:0004828">
    <property type="term" value="F:serine-tRNA ligase activity"/>
    <property type="evidence" value="ECO:0007669"/>
    <property type="project" value="UniProtKB-UniRule"/>
</dbReference>
<dbReference type="GO" id="GO:0016260">
    <property type="term" value="P:selenocysteine biosynthetic process"/>
    <property type="evidence" value="ECO:0007669"/>
    <property type="project" value="UniProtKB-UniRule"/>
</dbReference>
<dbReference type="GO" id="GO:0006434">
    <property type="term" value="P:seryl-tRNA aminoacylation"/>
    <property type="evidence" value="ECO:0007669"/>
    <property type="project" value="UniProtKB-UniRule"/>
</dbReference>
<dbReference type="CDD" id="cd00770">
    <property type="entry name" value="SerRS_core"/>
    <property type="match status" value="1"/>
</dbReference>
<dbReference type="Gene3D" id="3.30.930.10">
    <property type="entry name" value="Bira Bifunctional Protein, Domain 2"/>
    <property type="match status" value="1"/>
</dbReference>
<dbReference type="Gene3D" id="1.10.287.40">
    <property type="entry name" value="Serine-tRNA synthetase, tRNA binding domain"/>
    <property type="match status" value="1"/>
</dbReference>
<dbReference type="HAMAP" id="MF_00176">
    <property type="entry name" value="Ser_tRNA_synth_type1"/>
    <property type="match status" value="1"/>
</dbReference>
<dbReference type="InterPro" id="IPR002314">
    <property type="entry name" value="aa-tRNA-synt_IIb"/>
</dbReference>
<dbReference type="InterPro" id="IPR006195">
    <property type="entry name" value="aa-tRNA-synth_II"/>
</dbReference>
<dbReference type="InterPro" id="IPR045864">
    <property type="entry name" value="aa-tRNA-synth_II/BPL/LPL"/>
</dbReference>
<dbReference type="InterPro" id="IPR002317">
    <property type="entry name" value="Ser-tRNA-ligase_type_1"/>
</dbReference>
<dbReference type="InterPro" id="IPR015866">
    <property type="entry name" value="Ser-tRNA-synth_1_N"/>
</dbReference>
<dbReference type="InterPro" id="IPR042103">
    <property type="entry name" value="SerRS_1_N_sf"/>
</dbReference>
<dbReference type="InterPro" id="IPR033729">
    <property type="entry name" value="SerRS_core"/>
</dbReference>
<dbReference type="InterPro" id="IPR010978">
    <property type="entry name" value="tRNA-bd_arm"/>
</dbReference>
<dbReference type="NCBIfam" id="TIGR00414">
    <property type="entry name" value="serS"/>
    <property type="match status" value="1"/>
</dbReference>
<dbReference type="PANTHER" id="PTHR43697:SF1">
    <property type="entry name" value="SERINE--TRNA LIGASE"/>
    <property type="match status" value="1"/>
</dbReference>
<dbReference type="PANTHER" id="PTHR43697">
    <property type="entry name" value="SERYL-TRNA SYNTHETASE"/>
    <property type="match status" value="1"/>
</dbReference>
<dbReference type="Pfam" id="PF02403">
    <property type="entry name" value="Seryl_tRNA_N"/>
    <property type="match status" value="1"/>
</dbReference>
<dbReference type="Pfam" id="PF00587">
    <property type="entry name" value="tRNA-synt_2b"/>
    <property type="match status" value="1"/>
</dbReference>
<dbReference type="PIRSF" id="PIRSF001529">
    <property type="entry name" value="Ser-tRNA-synth_IIa"/>
    <property type="match status" value="1"/>
</dbReference>
<dbReference type="PRINTS" id="PR00981">
    <property type="entry name" value="TRNASYNTHSER"/>
</dbReference>
<dbReference type="SUPFAM" id="SSF55681">
    <property type="entry name" value="Class II aaRS and biotin synthetases"/>
    <property type="match status" value="1"/>
</dbReference>
<dbReference type="SUPFAM" id="SSF46589">
    <property type="entry name" value="tRNA-binding arm"/>
    <property type="match status" value="1"/>
</dbReference>
<dbReference type="PROSITE" id="PS50862">
    <property type="entry name" value="AA_TRNA_LIGASE_II"/>
    <property type="match status" value="1"/>
</dbReference>
<organism>
    <name type="scientific">Fusobacterium nucleatum subsp. nucleatum (strain ATCC 25586 / DSM 15643 / BCRC 10681 / CIP 101130 / JCM 8532 / KCTC 2640 / LMG 13131 / VPI 4355)</name>
    <dbReference type="NCBI Taxonomy" id="190304"/>
    <lineage>
        <taxon>Bacteria</taxon>
        <taxon>Fusobacteriati</taxon>
        <taxon>Fusobacteriota</taxon>
        <taxon>Fusobacteriia</taxon>
        <taxon>Fusobacteriales</taxon>
        <taxon>Fusobacteriaceae</taxon>
        <taxon>Fusobacterium</taxon>
    </lineage>
</organism>
<name>SYS_FUSNN</name>
<sequence length="421" mass="48389">MLELKFMRENVEMLKEMLKNRNSNVDMDAFVELDSKRREVLSEVENLKRERNNASAEIANLKKEKKNADHIIEKMGEVSTKIKDLDAELVEIDEKIKDIQLNIPNVYHPSTPIGPDEDYNLEIRKWGIPKKFDFEPKSHWDIGEDLGILDFERGAKLSGSRFVLYRGAAARLERAIINFMLDVHTLEEGYTEHITPFMVKAEVCEGTGQLPKFEEDMYKTTDDMYLISTSEITMTNIHRKEILEQAELPKYYTAYSPCFRREAGSYGKDVKGLIRLHQFNKVEMVKITDAESSYDELEKMVNNAETILQRLELPYRVIQLCSGDLGFSAAKTYDLEVWLPSQNKYREISSCSNCEAFQARRMGLKYRVPNGSEFCHTLNGSGLAVGRTLVAIMENYQQEDGSFLVPKVLIPYMGGVDVIKK</sequence>
<keyword id="KW-0030">Aminoacyl-tRNA synthetase</keyword>
<keyword id="KW-0067">ATP-binding</keyword>
<keyword id="KW-0963">Cytoplasm</keyword>
<keyword id="KW-0436">Ligase</keyword>
<keyword id="KW-0547">Nucleotide-binding</keyword>
<keyword id="KW-0648">Protein biosynthesis</keyword>
<keyword id="KW-1185">Reference proteome</keyword>
<comment type="function">
    <text evidence="1">Catalyzes the attachment of serine to tRNA(Ser). Is also able to aminoacylate tRNA(Sec) with serine, to form the misacylated tRNA L-seryl-tRNA(Sec), which will be further converted into selenocysteinyl-tRNA(Sec).</text>
</comment>
<comment type="catalytic activity">
    <reaction evidence="1">
        <text>tRNA(Ser) + L-serine + ATP = L-seryl-tRNA(Ser) + AMP + diphosphate + H(+)</text>
        <dbReference type="Rhea" id="RHEA:12292"/>
        <dbReference type="Rhea" id="RHEA-COMP:9669"/>
        <dbReference type="Rhea" id="RHEA-COMP:9703"/>
        <dbReference type="ChEBI" id="CHEBI:15378"/>
        <dbReference type="ChEBI" id="CHEBI:30616"/>
        <dbReference type="ChEBI" id="CHEBI:33019"/>
        <dbReference type="ChEBI" id="CHEBI:33384"/>
        <dbReference type="ChEBI" id="CHEBI:78442"/>
        <dbReference type="ChEBI" id="CHEBI:78533"/>
        <dbReference type="ChEBI" id="CHEBI:456215"/>
        <dbReference type="EC" id="6.1.1.11"/>
    </reaction>
</comment>
<comment type="catalytic activity">
    <reaction evidence="1">
        <text>tRNA(Sec) + L-serine + ATP = L-seryl-tRNA(Sec) + AMP + diphosphate + H(+)</text>
        <dbReference type="Rhea" id="RHEA:42580"/>
        <dbReference type="Rhea" id="RHEA-COMP:9742"/>
        <dbReference type="Rhea" id="RHEA-COMP:10128"/>
        <dbReference type="ChEBI" id="CHEBI:15378"/>
        <dbReference type="ChEBI" id="CHEBI:30616"/>
        <dbReference type="ChEBI" id="CHEBI:33019"/>
        <dbReference type="ChEBI" id="CHEBI:33384"/>
        <dbReference type="ChEBI" id="CHEBI:78442"/>
        <dbReference type="ChEBI" id="CHEBI:78533"/>
        <dbReference type="ChEBI" id="CHEBI:456215"/>
        <dbReference type="EC" id="6.1.1.11"/>
    </reaction>
</comment>
<comment type="pathway">
    <text evidence="1">Aminoacyl-tRNA biosynthesis; selenocysteinyl-tRNA(Sec) biosynthesis; L-seryl-tRNA(Sec) from L-serine and tRNA(Sec): step 1/1.</text>
</comment>
<comment type="subunit">
    <text evidence="1">Homodimer. The tRNA molecule binds across the dimer.</text>
</comment>
<comment type="subcellular location">
    <subcellularLocation>
        <location evidence="1">Cytoplasm</location>
    </subcellularLocation>
</comment>
<comment type="domain">
    <text evidence="1">Consists of two distinct domains, a catalytic core and a N-terminal extension that is involved in tRNA binding.</text>
</comment>
<comment type="similarity">
    <text evidence="1">Belongs to the class-II aminoacyl-tRNA synthetase family. Type-1 seryl-tRNA synthetase subfamily.</text>
</comment>
<comment type="sequence caution" evidence="2">
    <conflict type="erroneous initiation">
        <sequence resource="EMBL-CDS" id="AAL94319"/>
    </conflict>
</comment>
<proteinExistence type="inferred from homology"/>
<gene>
    <name evidence="1" type="primary">serS</name>
    <name type="ordered locus">FN0110</name>
</gene>